<comment type="function">
    <text evidence="1">Has antibacterial activity against the Gram-positive bacteria S.aureus ATCC 6535 and S.saprophyticus, and the Gram-negative bacteria E.coli CCT1371, E.cloacae ATCC 23355, K.pneumoniae ATCC 13883 and P.aeruginosa ATCC 27853, and antifungal activity against C.albicans. Lacks cytolytic activity and do not induce rat peritoneal mast cell degranulation.</text>
</comment>
<comment type="subcellular location">
    <subcellularLocation>
        <location evidence="1">Secreted</location>
    </subcellularLocation>
</comment>
<comment type="tissue specificity">
    <text evidence="1">Found in the hypopharyngeal glands of the worker honeybee.</text>
</comment>
<comment type="mass spectrometry"/>
<reference evidence="2" key="1">
    <citation type="journal article" date="2004" name="Peptides">
        <title>Jelleines: a family of antimicrobial peptides from the royal jelly of honeybees (Apis mellifera).</title>
        <authorList>
            <person name="Fontana R."/>
            <person name="Mendes M.A."/>
            <person name="de Souza B.M."/>
            <person name="Konno K."/>
            <person name="Cesar L.M."/>
            <person name="Malaspina O."/>
            <person name="Palma M.S."/>
        </authorList>
    </citation>
    <scope>PROTEIN SEQUENCE</scope>
    <scope>FUNCTION</scope>
    <scope>SUBCELLULAR LOCATION</scope>
    <scope>TISSUE SPECIFICITY</scope>
    <scope>MASS SPECTROMETRY</scope>
    <scope>AMIDATION AT LEU-9</scope>
</reference>
<proteinExistence type="evidence at protein level"/>
<protein>
    <recommendedName>
        <fullName>Jellein-3</fullName>
    </recommendedName>
    <alternativeName>
        <fullName>Jelleine-III</fullName>
    </alternativeName>
</protein>
<keyword id="KW-0027">Amidation</keyword>
<keyword id="KW-0044">Antibiotic</keyword>
<keyword id="KW-0929">Antimicrobial</keyword>
<keyword id="KW-0903">Direct protein sequencing</keyword>
<keyword id="KW-0295">Fungicide</keyword>
<keyword id="KW-1185">Reference proteome</keyword>
<keyword id="KW-0964">Secreted</keyword>
<dbReference type="InParanoid" id="P84759"/>
<dbReference type="Proteomes" id="UP000005203">
    <property type="component" value="Unplaced"/>
</dbReference>
<dbReference type="GO" id="GO:0005576">
    <property type="term" value="C:extracellular region"/>
    <property type="evidence" value="ECO:0000314"/>
    <property type="project" value="UniProtKB"/>
</dbReference>
<dbReference type="GO" id="GO:0050832">
    <property type="term" value="P:defense response to fungus"/>
    <property type="evidence" value="ECO:0000314"/>
    <property type="project" value="UniProtKB"/>
</dbReference>
<dbReference type="GO" id="GO:0050829">
    <property type="term" value="P:defense response to Gram-negative bacterium"/>
    <property type="evidence" value="ECO:0000314"/>
    <property type="project" value="UniProtKB"/>
</dbReference>
<dbReference type="GO" id="GO:0050830">
    <property type="term" value="P:defense response to Gram-positive bacterium"/>
    <property type="evidence" value="ECO:0000314"/>
    <property type="project" value="UniProtKB"/>
</dbReference>
<dbReference type="GO" id="GO:0031640">
    <property type="term" value="P:killing of cells of another organism"/>
    <property type="evidence" value="ECO:0007669"/>
    <property type="project" value="UniProtKB-KW"/>
</dbReference>
<organism>
    <name type="scientific">Apis mellifera</name>
    <name type="common">Honeybee</name>
    <dbReference type="NCBI Taxonomy" id="7460"/>
    <lineage>
        <taxon>Eukaryota</taxon>
        <taxon>Metazoa</taxon>
        <taxon>Ecdysozoa</taxon>
        <taxon>Arthropoda</taxon>
        <taxon>Hexapoda</taxon>
        <taxon>Insecta</taxon>
        <taxon>Pterygota</taxon>
        <taxon>Neoptera</taxon>
        <taxon>Endopterygota</taxon>
        <taxon>Hymenoptera</taxon>
        <taxon>Apocrita</taxon>
        <taxon>Aculeata</taxon>
        <taxon>Apoidea</taxon>
        <taxon>Anthophila</taxon>
        <taxon>Apidae</taxon>
        <taxon>Apis</taxon>
    </lineage>
</organism>
<sequence>EPFKISIHL</sequence>
<evidence type="ECO:0000269" key="1">
    <source>
    </source>
</evidence>
<evidence type="ECO:0000305" key="2"/>
<feature type="peptide" id="PRO_0000223883" description="Jellein-3">
    <location>
        <begin position="1"/>
        <end position="9"/>
    </location>
</feature>
<feature type="modified residue" description="Leucine amide" evidence="1">
    <location>
        <position position="9"/>
    </location>
</feature>
<accession>P84759</accession>
<name>JELL3_APIME</name>